<organism>
    <name type="scientific">Macrovipera lebetinus</name>
    <name type="common">Levantine viper</name>
    <name type="synonym">Vipera lebetina</name>
    <dbReference type="NCBI Taxonomy" id="3148341"/>
    <lineage>
        <taxon>Eukaryota</taxon>
        <taxon>Metazoa</taxon>
        <taxon>Chordata</taxon>
        <taxon>Craniata</taxon>
        <taxon>Vertebrata</taxon>
        <taxon>Euteleostomi</taxon>
        <taxon>Lepidosauria</taxon>
        <taxon>Squamata</taxon>
        <taxon>Bifurcata</taxon>
        <taxon>Unidentata</taxon>
        <taxon>Episquamata</taxon>
        <taxon>Toxicofera</taxon>
        <taxon>Serpentes</taxon>
        <taxon>Colubroidea</taxon>
        <taxon>Viperidae</taxon>
        <taxon>Viperinae</taxon>
        <taxon>Macrovipera</taxon>
    </lineage>
</organism>
<feature type="chain" id="PRO_0000457035" description="Snake venom 5'-nucleotidase">
    <location>
        <begin position="1" status="less than"/>
        <end position="384"/>
    </location>
</feature>
<feature type="propeptide" id="PRO_0000457036" description="Removed in mature form" evidence="3">
    <location>
        <begin position="385"/>
        <end position="408"/>
    </location>
</feature>
<feature type="propeptide" id="PRO_0000457037" description="Removed in mature form" evidence="3">
    <location>
        <begin position="385"/>
        <end position="388"/>
    </location>
</feature>
<feature type="binding site" evidence="1">
    <location>
        <position position="54"/>
    </location>
    <ligand>
        <name>Zn(2+)</name>
        <dbReference type="ChEBI" id="CHEBI:29105"/>
        <label>1</label>
    </ligand>
</feature>
<feature type="binding site" evidence="1">
    <location>
        <position position="77"/>
    </location>
    <ligand>
        <name>Zn(2+)</name>
        <dbReference type="ChEBI" id="CHEBI:29105"/>
        <label>1</label>
    </ligand>
</feature>
<feature type="binding site" evidence="3">
    <location>
        <position position="188"/>
    </location>
    <ligand>
        <name>AMP</name>
        <dbReference type="ChEBI" id="CHEBI:456215"/>
    </ligand>
</feature>
<feature type="binding site" evidence="3">
    <location>
        <position position="224"/>
    </location>
    <ligand>
        <name>AMP</name>
        <dbReference type="ChEBI" id="CHEBI:456215"/>
    </ligand>
</feature>
<feature type="binding site" evidence="3">
    <location>
        <position position="229"/>
    </location>
    <ligand>
        <name>AMP</name>
        <dbReference type="ChEBI" id="CHEBI:456215"/>
    </ligand>
</feature>
<feature type="binding site" evidence="3">
    <location>
        <position position="252"/>
    </location>
    <ligand>
        <name>AMP</name>
        <dbReference type="ChEBI" id="CHEBI:456215"/>
    </ligand>
</feature>
<feature type="binding site" evidence="3">
    <location>
        <position position="335"/>
    </location>
    <ligand>
        <name>AMP</name>
        <dbReference type="ChEBI" id="CHEBI:456215"/>
    </ligand>
</feature>
<feature type="binding site" evidence="3">
    <location>
        <position position="341"/>
    </location>
    <ligand>
        <name>AMP</name>
        <dbReference type="ChEBI" id="CHEBI:456215"/>
    </ligand>
</feature>
<feature type="glycosylation site" description="N-linked (GlcNAc...) asparagine" evidence="1">
    <location>
        <position position="167"/>
    </location>
</feature>
<feature type="glycosylation site" description="N-linked (GlcNAc...) asparagine" evidence="4">
    <location>
        <position position="181"/>
    </location>
</feature>
<feature type="disulfide bond" evidence="1">
    <location>
        <begin position="187"/>
        <end position="192"/>
    </location>
</feature>
<feature type="disulfide bond" evidence="1">
    <location>
        <begin position="199"/>
        <end position="221"/>
    </location>
</feature>
<feature type="disulfide bond" evidence="1">
    <location>
        <begin position="311"/>
        <end position="314"/>
    </location>
</feature>
<feature type="non-terminal residue" evidence="10">
    <location>
        <position position="1"/>
    </location>
</feature>
<proteinExistence type="evidence at protein level"/>
<keyword id="KW-1015">Disulfide bond</keyword>
<keyword id="KW-0325">Glycoprotein</keyword>
<keyword id="KW-0336">GPI-anchor</keyword>
<keyword id="KW-1199">Hemostasis impairing toxin</keyword>
<keyword id="KW-0378">Hydrolase</keyword>
<keyword id="KW-0449">Lipoprotein</keyword>
<keyword id="KW-0472">Membrane</keyword>
<keyword id="KW-0479">Metal-binding</keyword>
<keyword id="KW-0547">Nucleotide-binding</keyword>
<keyword id="KW-1201">Platelet aggregation inhibiting toxin</keyword>
<keyword id="KW-0800">Toxin</keyword>
<keyword id="KW-0862">Zinc</keyword>
<dbReference type="EC" id="3.1.3.5" evidence="5"/>
<dbReference type="EMBL" id="KF408296">
    <property type="protein sequence ID" value="AHJ80886.1"/>
    <property type="molecule type" value="mRNA"/>
</dbReference>
<dbReference type="SMR" id="W8EFS0"/>
<dbReference type="BRENDA" id="3.1.3.5">
    <property type="organism ID" value="6665"/>
</dbReference>
<dbReference type="GO" id="GO:0005886">
    <property type="term" value="C:plasma membrane"/>
    <property type="evidence" value="ECO:0007669"/>
    <property type="project" value="TreeGrafter"/>
</dbReference>
<dbReference type="GO" id="GO:0098552">
    <property type="term" value="C:side of membrane"/>
    <property type="evidence" value="ECO:0007669"/>
    <property type="project" value="UniProtKB-KW"/>
</dbReference>
<dbReference type="GO" id="GO:0043262">
    <property type="term" value="F:ADP phosphatase activity"/>
    <property type="evidence" value="ECO:0007669"/>
    <property type="project" value="RHEA"/>
</dbReference>
<dbReference type="GO" id="GO:0050484">
    <property type="term" value="F:GMP 5'-nucleotidase activity"/>
    <property type="evidence" value="ECO:0007669"/>
    <property type="project" value="RHEA"/>
</dbReference>
<dbReference type="GO" id="GO:0046872">
    <property type="term" value="F:metal ion binding"/>
    <property type="evidence" value="ECO:0007669"/>
    <property type="project" value="UniProtKB-KW"/>
</dbReference>
<dbReference type="GO" id="GO:0000166">
    <property type="term" value="F:nucleotide binding"/>
    <property type="evidence" value="ECO:0007669"/>
    <property type="project" value="UniProtKB-KW"/>
</dbReference>
<dbReference type="GO" id="GO:0090729">
    <property type="term" value="F:toxin activity"/>
    <property type="evidence" value="ECO:0007669"/>
    <property type="project" value="UniProtKB-KW"/>
</dbReference>
<dbReference type="GO" id="GO:0006196">
    <property type="term" value="P:AMP catabolic process"/>
    <property type="evidence" value="ECO:0007669"/>
    <property type="project" value="TreeGrafter"/>
</dbReference>
<dbReference type="FunFam" id="3.90.780.10:FF:000001">
    <property type="entry name" value="NT5E isoform 3"/>
    <property type="match status" value="1"/>
</dbReference>
<dbReference type="Gene3D" id="3.60.21.10">
    <property type="match status" value="1"/>
</dbReference>
<dbReference type="Gene3D" id="3.90.780.10">
    <property type="entry name" value="5'-Nucleotidase, C-terminal domain"/>
    <property type="match status" value="1"/>
</dbReference>
<dbReference type="InterPro" id="IPR008334">
    <property type="entry name" value="5'-Nucleotdase_C"/>
</dbReference>
<dbReference type="InterPro" id="IPR036907">
    <property type="entry name" value="5'-Nucleotdase_C_sf"/>
</dbReference>
<dbReference type="InterPro" id="IPR006179">
    <property type="entry name" value="5_nucleotidase/apyrase"/>
</dbReference>
<dbReference type="InterPro" id="IPR029052">
    <property type="entry name" value="Metallo-depent_PP-like"/>
</dbReference>
<dbReference type="PANTHER" id="PTHR11575:SF24">
    <property type="entry name" value="5'-NUCLEOTIDASE"/>
    <property type="match status" value="1"/>
</dbReference>
<dbReference type="PANTHER" id="PTHR11575">
    <property type="entry name" value="5'-NUCLEOTIDASE-RELATED"/>
    <property type="match status" value="1"/>
</dbReference>
<dbReference type="Pfam" id="PF02872">
    <property type="entry name" value="5_nucleotid_C"/>
    <property type="match status" value="1"/>
</dbReference>
<dbReference type="PRINTS" id="PR01607">
    <property type="entry name" value="APYRASEFAMLY"/>
</dbReference>
<dbReference type="SUPFAM" id="SSF55816">
    <property type="entry name" value="5'-nucleotidase (syn. UDP-sugar hydrolase), C-terminal domain"/>
    <property type="match status" value="1"/>
</dbReference>
<dbReference type="SUPFAM" id="SSF56300">
    <property type="entry name" value="Metallo-dependent phosphatases"/>
    <property type="match status" value="1"/>
</dbReference>
<sequence length="408" mass="45031">AREKVGIIGYTTKETPVLSNPGPYLEFRDEVEELQIHANKLTTLGVNKIIALGHSGFFEDQRIARKVKGVDVVVGGHTNTFLYTGSPPSTEVPAGNYPFMVQSDDGRQVPVVQAYAFGKYLGYLNVVFNDKGNVIKASGNPILLNKDIPEDQVVKAQVNKMKIQLQNYYSQEIGKTIVYLNGTTQACRFHECNLGNLICDAVIYNNLRHPDDNEWNHVSMCIVNGGGIRSPIDERANNGIITLEELTSVLPFGGTFDLLQIKGSALKQAFEHSVHRHGQGTGELLQVSGIKVVYDLSQKPGSRVVSLNVLCTKCRVPTYVPLEMEKTYKVLLPSFLATGGDGYHMLKGDSSNHNSGDLDISIVGDYIKRMEKVFPAVEGRVTFLDGTLFQAQLFLTWGLCISLLFFIL</sequence>
<accession>W8EFS0</accession>
<comment type="function">
    <text evidence="5 8">Hydrolyzes nucleotides into nucleosides (PubMed:25434533). Prefers AMP as the substrate but also cleaves GMP and ADP (PubMed:25434533). Does not affect AMP, cAMP and cGMP (PubMed:25434533). Inhibits ADP- and collagen-induced platelet aggregation (PubMed:25434533). Snake venom 5'-nucleotidases are widely distributed among venomous snake taxa, but there is a lack of information about their biological activities. They have been shown to inhibit platelet aggregation. This effect may be due to the liberation of inhibitory AMP or adenosine by its action on ADP released upon initiation of aggregation. Venom 5'-nucleotidases are also known to synergistically act in vivo with other toxins like ADPases, phospholipases, and disintegrins to exert a more pronounced anti-coagulant effect (PubMed:20186872).</text>
</comment>
<comment type="catalytic activity">
    <reaction evidence="5">
        <text>a ribonucleoside 5'-phosphate + H2O = a ribonucleoside + phosphate</text>
        <dbReference type="Rhea" id="RHEA:12484"/>
        <dbReference type="ChEBI" id="CHEBI:15377"/>
        <dbReference type="ChEBI" id="CHEBI:18254"/>
        <dbReference type="ChEBI" id="CHEBI:43474"/>
        <dbReference type="ChEBI" id="CHEBI:58043"/>
        <dbReference type="EC" id="3.1.3.5"/>
    </reaction>
</comment>
<comment type="catalytic activity">
    <reaction evidence="5">
        <text>AMP + H2O = adenosine + phosphate</text>
        <dbReference type="Rhea" id="RHEA:29375"/>
        <dbReference type="ChEBI" id="CHEBI:15377"/>
        <dbReference type="ChEBI" id="CHEBI:16335"/>
        <dbReference type="ChEBI" id="CHEBI:43474"/>
        <dbReference type="ChEBI" id="CHEBI:456215"/>
    </reaction>
</comment>
<comment type="catalytic activity">
    <reaction evidence="5">
        <text>GMP + H2O = guanosine + phosphate</text>
        <dbReference type="Rhea" id="RHEA:27714"/>
        <dbReference type="ChEBI" id="CHEBI:15377"/>
        <dbReference type="ChEBI" id="CHEBI:16750"/>
        <dbReference type="ChEBI" id="CHEBI:43474"/>
        <dbReference type="ChEBI" id="CHEBI:58115"/>
    </reaction>
</comment>
<comment type="catalytic activity">
    <reaction evidence="5">
        <text>ADP + H2O = AMP + phosphate + H(+)</text>
        <dbReference type="Rhea" id="RHEA:61436"/>
        <dbReference type="ChEBI" id="CHEBI:15377"/>
        <dbReference type="ChEBI" id="CHEBI:15378"/>
        <dbReference type="ChEBI" id="CHEBI:43474"/>
        <dbReference type="ChEBI" id="CHEBI:456215"/>
        <dbReference type="ChEBI" id="CHEBI:456216"/>
    </reaction>
</comment>
<comment type="activity regulation">
    <text evidence="5">Is potently inhibited by metal ions Fe(3+), Cu(2+) and Zn(2+). Is enhanced by Mn(2+). Ca(2+) and Mg(2+) have no effect.</text>
</comment>
<comment type="biophysicochemical properties">
    <phDependence>
        <text evidence="5">Optimum pH is 7.5.</text>
    </phDependence>
    <temperatureDependence>
        <text evidence="5">Optimum temperature is 5-37 degrees Celsius.</text>
    </temperatureDependence>
</comment>
<comment type="subunit">
    <text evidence="5">Homodimer.</text>
</comment>
<comment type="subcellular location">
    <subcellularLocation>
        <location evidence="2">Membrane</location>
        <topology evidence="3">Lipid-anchor</topology>
        <topology evidence="3">GPI-anchor</topology>
    </subcellularLocation>
</comment>
<comment type="tissue specificity">
    <text evidence="1">Expressed by the venom gland.</text>
</comment>
<comment type="PTM">
    <text>Venom 5'-nucleotidases (or a part thereof) may be released into the venom via exosome-like vesicles. They may be attached via a GPI anchor to the membrane of these vesicles. Soluble forms of 5'-nucleotidase might be released by cleavage of the ectodomain in the exosome-like vesicles or venom gland cells.</text>
</comment>
<comment type="similarity">
    <text evidence="7">Belongs to the 5'-nucleotidase family.</text>
</comment>
<comment type="caution">
    <text evidence="9">In contrast to most nucleotidases that need divalent cations as cofactor, this enzyme does not require ions for activity.</text>
</comment>
<comment type="caution">
    <text evidence="7">Lacks the conserved Ser residue in position 384 that is modified to a GPI-anchor amidated serine in homolog proteins.</text>
</comment>
<protein>
    <recommendedName>
        <fullName evidence="6">Snake venom 5'-nucleotidase</fullName>
        <shortName evidence="6">5'-NT</shortName>
        <shortName evidence="6">VL5'NT</shortName>
        <ecNumber evidence="5">3.1.3.5</ecNumber>
    </recommendedName>
    <alternativeName>
        <fullName evidence="6">Ecto-5'-nucleotidase</fullName>
        <shortName evidence="6">Ecto-5'-NT</shortName>
    </alternativeName>
</protein>
<evidence type="ECO:0000250" key="1">
    <source>
        <dbReference type="UniProtKB" id="A0A2I4HXH5"/>
    </source>
</evidence>
<evidence type="ECO:0000250" key="2">
    <source>
        <dbReference type="UniProtKB" id="P0DJJ5"/>
    </source>
</evidence>
<evidence type="ECO:0000250" key="3">
    <source>
        <dbReference type="UniProtKB" id="P21589"/>
    </source>
</evidence>
<evidence type="ECO:0000255" key="4">
    <source>
        <dbReference type="PROSITE-ProRule" id="PRU00498"/>
    </source>
</evidence>
<evidence type="ECO:0000269" key="5">
    <source>
    </source>
</evidence>
<evidence type="ECO:0000303" key="6">
    <source>
    </source>
</evidence>
<evidence type="ECO:0000305" key="7"/>
<evidence type="ECO:0000305" key="8">
    <source>
    </source>
</evidence>
<evidence type="ECO:0000305" key="9">
    <source>
    </source>
</evidence>
<evidence type="ECO:0000312" key="10">
    <source>
        <dbReference type="EMBL" id="AHJ80886.1"/>
    </source>
</evidence>
<name>V5NTD_MACLB</name>
<reference evidence="10" key="1">
    <citation type="journal article" date="2015" name="Toxicon">
        <title>5'-nucleotidase from Vipera lebetina venom.</title>
        <authorList>
            <person name="Trummal K."/>
            <person name="Samel M."/>
            <person name="Aaspollu A."/>
            <person name="Tonismagi K."/>
            <person name="Titma T."/>
            <person name="Subbi J."/>
            <person name="Siigur J."/>
            <person name="Siigur E."/>
        </authorList>
    </citation>
    <scope>NUCLEOTIDE SEQUENCE [MRNA]</scope>
    <scope>FUNCTION</scope>
    <scope>CATALYTIC ACTIVITY</scope>
    <scope>IDENTIFICATION BY MASS SPECTROMETRY</scope>
    <scope>ACTIVITY REGULATION</scope>
    <scope>BIOPHYSICOCHEMICAL PROPERTIES</scope>
    <scope>SUBUNIT</scope>
    <scope>3D-STRUCTURE MODELING</scope>
    <source>
        <tissue>Venom</tissue>
        <tissue>Venom gland</tissue>
    </source>
</reference>
<reference key="2">
    <citation type="journal article" date="2010" name="Cell Biochem. Funct.">
        <title>The pharmacological role of nucleotidases in snake venoms.</title>
        <authorList>
            <person name="Dhananjaya B.L."/>
            <person name="D'Souza C.J."/>
        </authorList>
    </citation>
    <scope>REVIEW</scope>
    <scope>FUNCTION</scope>
</reference>